<evidence type="ECO:0000250" key="1"/>
<evidence type="ECO:0000250" key="2">
    <source>
        <dbReference type="UniProtKB" id="P02994"/>
    </source>
</evidence>
<evidence type="ECO:0000305" key="3"/>
<gene>
    <name type="primary">TEF</name>
</gene>
<comment type="function">
    <text>This protein promotes the GTP-dependent binding of aminoacyl-tRNA to the A-site of ribosomes during protein biosynthesis.</text>
</comment>
<comment type="subcellular location">
    <subcellularLocation>
        <location>Cytoplasm</location>
    </subcellularLocation>
</comment>
<comment type="similarity">
    <text evidence="3">Belongs to the TRAFAC class translation factor GTPase superfamily. Classic translation factor GTPase family. EF-Tu/EF-1A subfamily.</text>
</comment>
<reference key="1">
    <citation type="journal article" date="1995" name="Curr. Genet.">
        <title>Cloning and characterization of a TEF gene for elongation factor 1 alpha from the yeast Arxula adeninivorans.</title>
        <authorList>
            <person name="Roesel H."/>
            <person name="Kunze G."/>
        </authorList>
    </citation>
    <scope>NUCLEOTIDE SEQUENCE [GENOMIC DNA]</scope>
    <source>
        <strain>LS3</strain>
    </source>
</reference>
<sequence length="459" mass="50116">MGKEKTHVNVVVIGHVDSGKSTTTGHLIYKCGGIDKRTIEKFEKEAAELGKGSFKYAWVLDKLKAERERVITIDIALWKFETPKYYVTVIDAPGHRDFIKNMITGTSQADCAILIIAGGTGEFEAGISKDGQTREHALLAFTLGVRQLIVAINKMDSVNWSEDRYNEIVKETSNFIKKVGFNPKAVPFVPISGWNGDNMIEATTNASWYKGWHKETKEGKATGKTLLEAIDAVDPPTRPSDKPLRLPLQDVYKIGGIGTVPVGRVETGVIKPGMVVTFAPAGVTTEVKSVEMHHEQLPEGLPGDNVGFNVKNVSVKEIRRGNVAGDSKNDPPKGCDSFTAQVIIFNHPGQISAGYSPVLDCHTAHIACRFDELIEKIDRRSGKKVEDSPKFVKAGDAAIVRMIPSKPMCVETFTEYPPLGRFAVRDMRQTVAVGVIKSVEKSDKGAGKVTKAAQKAAKK</sequence>
<feature type="initiator methionine" description="Removed" evidence="2">
    <location>
        <position position="1"/>
    </location>
</feature>
<feature type="chain" id="PRO_0000090951" description="Elongation factor 1-alpha">
    <location>
        <begin position="2"/>
        <end position="459"/>
    </location>
</feature>
<feature type="domain" description="tr-type G">
    <location>
        <begin position="5"/>
        <end position="240"/>
    </location>
</feature>
<feature type="region of interest" description="G1" evidence="1">
    <location>
        <begin position="14"/>
        <end position="21"/>
    </location>
</feature>
<feature type="region of interest" description="G2" evidence="1">
    <location>
        <begin position="70"/>
        <end position="74"/>
    </location>
</feature>
<feature type="region of interest" description="G3" evidence="1">
    <location>
        <begin position="91"/>
        <end position="94"/>
    </location>
</feature>
<feature type="region of interest" description="G4" evidence="1">
    <location>
        <begin position="153"/>
        <end position="156"/>
    </location>
</feature>
<feature type="region of interest" description="G5" evidence="1">
    <location>
        <begin position="192"/>
        <end position="194"/>
    </location>
</feature>
<feature type="binding site" evidence="1">
    <location>
        <begin position="14"/>
        <end position="21"/>
    </location>
    <ligand>
        <name>GTP</name>
        <dbReference type="ChEBI" id="CHEBI:37565"/>
    </ligand>
</feature>
<feature type="binding site" evidence="1">
    <location>
        <begin position="91"/>
        <end position="95"/>
    </location>
    <ligand>
        <name>GTP</name>
        <dbReference type="ChEBI" id="CHEBI:37565"/>
    </ligand>
</feature>
<feature type="binding site" evidence="1">
    <location>
        <begin position="153"/>
        <end position="156"/>
    </location>
    <ligand>
        <name>GTP</name>
        <dbReference type="ChEBI" id="CHEBI:37565"/>
    </ligand>
</feature>
<feature type="modified residue" description="N,N,N-trimethylglycine" evidence="2">
    <location>
        <position position="2"/>
    </location>
</feature>
<feature type="modified residue" description="N6,N6-dimethyllysine; alternate" evidence="2">
    <location>
        <position position="3"/>
    </location>
</feature>
<feature type="modified residue" description="N6-methyllysine; alternate" evidence="2">
    <location>
        <position position="3"/>
    </location>
</feature>
<feature type="modified residue" description="N6-methyllysine" evidence="2">
    <location>
        <position position="30"/>
    </location>
</feature>
<feature type="modified residue" description="N6,N6,N6-trimethyllysine" evidence="2">
    <location>
        <position position="79"/>
    </location>
</feature>
<feature type="modified residue" description="N6,N6-dimethyllysine; alternate" evidence="2">
    <location>
        <position position="316"/>
    </location>
</feature>
<feature type="modified residue" description="N6-methyllysine; alternate" evidence="2">
    <location>
        <position position="316"/>
    </location>
</feature>
<feature type="modified residue" description="N6-methyllysine" evidence="2">
    <location>
        <position position="390"/>
    </location>
</feature>
<keyword id="KW-0963">Cytoplasm</keyword>
<keyword id="KW-0251">Elongation factor</keyword>
<keyword id="KW-0342">GTP-binding</keyword>
<keyword id="KW-0488">Methylation</keyword>
<keyword id="KW-0547">Nucleotide-binding</keyword>
<keyword id="KW-0648">Protein biosynthesis</keyword>
<dbReference type="EMBL" id="Z47379">
    <property type="protein sequence ID" value="CAA87455.1"/>
    <property type="molecule type" value="Genomic_DNA"/>
</dbReference>
<dbReference type="PIR" id="S59595">
    <property type="entry name" value="S59595"/>
</dbReference>
<dbReference type="SMR" id="P41745"/>
<dbReference type="GO" id="GO:0005737">
    <property type="term" value="C:cytoplasm"/>
    <property type="evidence" value="ECO:0007669"/>
    <property type="project" value="UniProtKB-SubCell"/>
</dbReference>
<dbReference type="GO" id="GO:0005525">
    <property type="term" value="F:GTP binding"/>
    <property type="evidence" value="ECO:0007669"/>
    <property type="project" value="UniProtKB-KW"/>
</dbReference>
<dbReference type="GO" id="GO:0003924">
    <property type="term" value="F:GTPase activity"/>
    <property type="evidence" value="ECO:0007669"/>
    <property type="project" value="InterPro"/>
</dbReference>
<dbReference type="GO" id="GO:0003746">
    <property type="term" value="F:translation elongation factor activity"/>
    <property type="evidence" value="ECO:0007669"/>
    <property type="project" value="UniProtKB-KW"/>
</dbReference>
<dbReference type="CDD" id="cd01883">
    <property type="entry name" value="EF1_alpha"/>
    <property type="match status" value="1"/>
</dbReference>
<dbReference type="CDD" id="cd03693">
    <property type="entry name" value="EF1_alpha_II"/>
    <property type="match status" value="1"/>
</dbReference>
<dbReference type="CDD" id="cd03705">
    <property type="entry name" value="EF1_alpha_III"/>
    <property type="match status" value="1"/>
</dbReference>
<dbReference type="FunFam" id="2.40.30.10:FF:000003">
    <property type="entry name" value="Elongation factor 1-alpha"/>
    <property type="match status" value="1"/>
</dbReference>
<dbReference type="FunFam" id="2.40.30.10:FF:000005">
    <property type="entry name" value="Elongation factor 1-alpha"/>
    <property type="match status" value="1"/>
</dbReference>
<dbReference type="FunFam" id="3.40.50.300:FF:000211">
    <property type="entry name" value="Elongation factor 1-alpha"/>
    <property type="match status" value="1"/>
</dbReference>
<dbReference type="Gene3D" id="3.40.50.300">
    <property type="entry name" value="P-loop containing nucleotide triphosphate hydrolases"/>
    <property type="match status" value="1"/>
</dbReference>
<dbReference type="Gene3D" id="2.40.30.10">
    <property type="entry name" value="Translation factors"/>
    <property type="match status" value="2"/>
</dbReference>
<dbReference type="HAMAP" id="MF_00118_A">
    <property type="entry name" value="EF_Tu_A"/>
    <property type="match status" value="1"/>
</dbReference>
<dbReference type="InterPro" id="IPR004161">
    <property type="entry name" value="EFTu-like_2"/>
</dbReference>
<dbReference type="InterPro" id="IPR054696">
    <property type="entry name" value="GTP-eEF1A_C"/>
</dbReference>
<dbReference type="InterPro" id="IPR027417">
    <property type="entry name" value="P-loop_NTPase"/>
</dbReference>
<dbReference type="InterPro" id="IPR000795">
    <property type="entry name" value="T_Tr_GTP-bd_dom"/>
</dbReference>
<dbReference type="InterPro" id="IPR050100">
    <property type="entry name" value="TRAFAC_GTPase_members"/>
</dbReference>
<dbReference type="InterPro" id="IPR009000">
    <property type="entry name" value="Transl_B-barrel_sf"/>
</dbReference>
<dbReference type="InterPro" id="IPR009001">
    <property type="entry name" value="Transl_elong_EF1A/Init_IF2_C"/>
</dbReference>
<dbReference type="InterPro" id="IPR004539">
    <property type="entry name" value="Transl_elong_EF1A_euk/arc"/>
</dbReference>
<dbReference type="NCBIfam" id="TIGR00483">
    <property type="entry name" value="EF-1_alpha"/>
    <property type="match status" value="1"/>
</dbReference>
<dbReference type="NCBIfam" id="NF008969">
    <property type="entry name" value="PRK12317.1"/>
    <property type="match status" value="1"/>
</dbReference>
<dbReference type="PANTHER" id="PTHR23115">
    <property type="entry name" value="TRANSLATION FACTOR"/>
    <property type="match status" value="1"/>
</dbReference>
<dbReference type="Pfam" id="PF22594">
    <property type="entry name" value="GTP-eEF1A_C"/>
    <property type="match status" value="1"/>
</dbReference>
<dbReference type="Pfam" id="PF00009">
    <property type="entry name" value="GTP_EFTU"/>
    <property type="match status" value="1"/>
</dbReference>
<dbReference type="Pfam" id="PF03144">
    <property type="entry name" value="GTP_EFTU_D2"/>
    <property type="match status" value="1"/>
</dbReference>
<dbReference type="PRINTS" id="PR00315">
    <property type="entry name" value="ELONGATNFCT"/>
</dbReference>
<dbReference type="SUPFAM" id="SSF50465">
    <property type="entry name" value="EF-Tu/eEF-1alpha/eIF2-gamma C-terminal domain"/>
    <property type="match status" value="1"/>
</dbReference>
<dbReference type="SUPFAM" id="SSF52540">
    <property type="entry name" value="P-loop containing nucleoside triphosphate hydrolases"/>
    <property type="match status" value="1"/>
</dbReference>
<dbReference type="SUPFAM" id="SSF50447">
    <property type="entry name" value="Translation proteins"/>
    <property type="match status" value="1"/>
</dbReference>
<dbReference type="PROSITE" id="PS51722">
    <property type="entry name" value="G_TR_2"/>
    <property type="match status" value="1"/>
</dbReference>
<accession>P41745</accession>
<protein>
    <recommendedName>
        <fullName>Elongation factor 1-alpha</fullName>
        <shortName>EF-1-alpha</shortName>
    </recommendedName>
</protein>
<organism>
    <name type="scientific">Blastobotrys adeninivorans</name>
    <name type="common">Yeast</name>
    <name type="synonym">Arxula adeninivorans</name>
    <dbReference type="NCBI Taxonomy" id="409370"/>
    <lineage>
        <taxon>Eukaryota</taxon>
        <taxon>Fungi</taxon>
        <taxon>Dikarya</taxon>
        <taxon>Ascomycota</taxon>
        <taxon>Saccharomycotina</taxon>
        <taxon>Dipodascomycetes</taxon>
        <taxon>Dipodascales</taxon>
        <taxon>Trichomonascaceae</taxon>
        <taxon>Blastobotrys</taxon>
    </lineage>
</organism>
<proteinExistence type="inferred from homology"/>
<name>EF1A_BLAAD</name>